<evidence type="ECO:0000255" key="1">
    <source>
        <dbReference type="HAMAP-Rule" id="MF_00558"/>
    </source>
</evidence>
<feature type="chain" id="PRO_1000212032" description="Succinate--CoA ligase [ADP-forming] subunit beta">
    <location>
        <begin position="1"/>
        <end position="386"/>
    </location>
</feature>
<feature type="domain" description="ATP-grasp" evidence="1">
    <location>
        <begin position="9"/>
        <end position="244"/>
    </location>
</feature>
<feature type="binding site" evidence="1">
    <location>
        <position position="46"/>
    </location>
    <ligand>
        <name>ATP</name>
        <dbReference type="ChEBI" id="CHEBI:30616"/>
    </ligand>
</feature>
<feature type="binding site" evidence="1">
    <location>
        <begin position="53"/>
        <end position="55"/>
    </location>
    <ligand>
        <name>ATP</name>
        <dbReference type="ChEBI" id="CHEBI:30616"/>
    </ligand>
</feature>
<feature type="binding site" evidence="1">
    <location>
        <position position="99"/>
    </location>
    <ligand>
        <name>ATP</name>
        <dbReference type="ChEBI" id="CHEBI:30616"/>
    </ligand>
</feature>
<feature type="binding site" evidence="1">
    <location>
        <position position="102"/>
    </location>
    <ligand>
        <name>ATP</name>
        <dbReference type="ChEBI" id="CHEBI:30616"/>
    </ligand>
</feature>
<feature type="binding site" evidence="1">
    <location>
        <position position="107"/>
    </location>
    <ligand>
        <name>ATP</name>
        <dbReference type="ChEBI" id="CHEBI:30616"/>
    </ligand>
</feature>
<feature type="binding site" evidence="1">
    <location>
        <position position="199"/>
    </location>
    <ligand>
        <name>Mg(2+)</name>
        <dbReference type="ChEBI" id="CHEBI:18420"/>
    </ligand>
</feature>
<feature type="binding site" evidence="1">
    <location>
        <position position="213"/>
    </location>
    <ligand>
        <name>Mg(2+)</name>
        <dbReference type="ChEBI" id="CHEBI:18420"/>
    </ligand>
</feature>
<feature type="binding site" evidence="1">
    <location>
        <position position="264"/>
    </location>
    <ligand>
        <name>substrate</name>
        <note>ligand shared with subunit alpha</note>
    </ligand>
</feature>
<feature type="binding site" evidence="1">
    <location>
        <begin position="321"/>
        <end position="323"/>
    </location>
    <ligand>
        <name>substrate</name>
        <note>ligand shared with subunit alpha</note>
    </ligand>
</feature>
<reference key="1">
    <citation type="journal article" date="2009" name="PLoS ONE">
        <title>Genome sequence of the endosymbiont Rickettsia peacockii and comparison with virulent Rickettsia rickettsii: identification of virulence factors.</title>
        <authorList>
            <person name="Felsheim R.F."/>
            <person name="Kurtti T.J."/>
            <person name="Munderloh U.G."/>
        </authorList>
    </citation>
    <scope>NUCLEOTIDE SEQUENCE [LARGE SCALE GENOMIC DNA]</scope>
    <source>
        <strain>Rustic</strain>
    </source>
</reference>
<gene>
    <name evidence="1" type="primary">sucC</name>
    <name type="ordered locus">RPR_00655</name>
</gene>
<sequence length="386" mass="41895">MNIHEYQAKEILRKYGVPTSTGLVVTQTEKINETIDKLNTEVYVVKAQIHAGGRGKAGGVKVVKSKEEAKKVAHDMFGINLVTHQTGPQGQKVNRLYIESGCDILKEYYFSIVFDRSASCITFIASTEGGVDIEEVAEKTPEKIIKFSVDPATGLQDFHMRGIAYELGFKDNQAKQMKEIVKSVYNAFIETDAAQIEINPLIVNSDGHLLALDAKITFDDNGLLRHPNITAMRDHDEEDPLETRAANAGLSYVKMDGNIGCMVNGAGLAMATMDIIKLYGASPANFLDVGGGADRERVKEALKIILSDKEVQGILVNIFGGIMRCDIIAEGIIAAAKDIGIKVPLVVRLAGTNVEKGEEILSNSGLEIIPAHDLADAANKIVEAIR</sequence>
<keyword id="KW-0067">ATP-binding</keyword>
<keyword id="KW-0436">Ligase</keyword>
<keyword id="KW-0460">Magnesium</keyword>
<keyword id="KW-0479">Metal-binding</keyword>
<keyword id="KW-0547">Nucleotide-binding</keyword>
<keyword id="KW-0816">Tricarboxylic acid cycle</keyword>
<name>SUCC_RICPU</name>
<dbReference type="EC" id="6.2.1.5" evidence="1"/>
<dbReference type="EMBL" id="CP001227">
    <property type="protein sequence ID" value="ACR47102.1"/>
    <property type="molecule type" value="Genomic_DNA"/>
</dbReference>
<dbReference type="RefSeq" id="WP_012736401.1">
    <property type="nucleotide sequence ID" value="NC_012730.1"/>
</dbReference>
<dbReference type="SMR" id="C4K0K1"/>
<dbReference type="KEGG" id="rpk:RPR_00655"/>
<dbReference type="HOGENOM" id="CLU_037430_0_2_5"/>
<dbReference type="UniPathway" id="UPA00223">
    <property type="reaction ID" value="UER00999"/>
</dbReference>
<dbReference type="Proteomes" id="UP000005015">
    <property type="component" value="Chromosome"/>
</dbReference>
<dbReference type="GO" id="GO:0005829">
    <property type="term" value="C:cytosol"/>
    <property type="evidence" value="ECO:0007669"/>
    <property type="project" value="TreeGrafter"/>
</dbReference>
<dbReference type="GO" id="GO:0042709">
    <property type="term" value="C:succinate-CoA ligase complex"/>
    <property type="evidence" value="ECO:0007669"/>
    <property type="project" value="TreeGrafter"/>
</dbReference>
<dbReference type="GO" id="GO:0005524">
    <property type="term" value="F:ATP binding"/>
    <property type="evidence" value="ECO:0007669"/>
    <property type="project" value="UniProtKB-UniRule"/>
</dbReference>
<dbReference type="GO" id="GO:0000287">
    <property type="term" value="F:magnesium ion binding"/>
    <property type="evidence" value="ECO:0007669"/>
    <property type="project" value="UniProtKB-UniRule"/>
</dbReference>
<dbReference type="GO" id="GO:0004775">
    <property type="term" value="F:succinate-CoA ligase (ADP-forming) activity"/>
    <property type="evidence" value="ECO:0007669"/>
    <property type="project" value="UniProtKB-UniRule"/>
</dbReference>
<dbReference type="GO" id="GO:0004776">
    <property type="term" value="F:succinate-CoA ligase (GDP-forming) activity"/>
    <property type="evidence" value="ECO:0007669"/>
    <property type="project" value="RHEA"/>
</dbReference>
<dbReference type="GO" id="GO:0006104">
    <property type="term" value="P:succinyl-CoA metabolic process"/>
    <property type="evidence" value="ECO:0007669"/>
    <property type="project" value="TreeGrafter"/>
</dbReference>
<dbReference type="GO" id="GO:0006099">
    <property type="term" value="P:tricarboxylic acid cycle"/>
    <property type="evidence" value="ECO:0007669"/>
    <property type="project" value="UniProtKB-UniRule"/>
</dbReference>
<dbReference type="FunFam" id="3.30.1490.20:FF:000002">
    <property type="entry name" value="Succinate--CoA ligase [ADP-forming] subunit beta"/>
    <property type="match status" value="1"/>
</dbReference>
<dbReference type="FunFam" id="3.30.470.20:FF:000002">
    <property type="entry name" value="Succinate--CoA ligase [ADP-forming] subunit beta"/>
    <property type="match status" value="1"/>
</dbReference>
<dbReference type="FunFam" id="3.40.50.261:FF:000001">
    <property type="entry name" value="Succinate--CoA ligase [ADP-forming] subunit beta"/>
    <property type="match status" value="1"/>
</dbReference>
<dbReference type="Gene3D" id="3.30.1490.20">
    <property type="entry name" value="ATP-grasp fold, A domain"/>
    <property type="match status" value="1"/>
</dbReference>
<dbReference type="Gene3D" id="3.30.470.20">
    <property type="entry name" value="ATP-grasp fold, B domain"/>
    <property type="match status" value="1"/>
</dbReference>
<dbReference type="Gene3D" id="3.40.50.261">
    <property type="entry name" value="Succinyl-CoA synthetase domains"/>
    <property type="match status" value="1"/>
</dbReference>
<dbReference type="HAMAP" id="MF_00558">
    <property type="entry name" value="Succ_CoA_beta"/>
    <property type="match status" value="1"/>
</dbReference>
<dbReference type="InterPro" id="IPR011761">
    <property type="entry name" value="ATP-grasp"/>
</dbReference>
<dbReference type="InterPro" id="IPR013650">
    <property type="entry name" value="ATP-grasp_succ-CoA_synth-type"/>
</dbReference>
<dbReference type="InterPro" id="IPR013815">
    <property type="entry name" value="ATP_grasp_subdomain_1"/>
</dbReference>
<dbReference type="InterPro" id="IPR017866">
    <property type="entry name" value="Succ-CoA_synthase_bsu_CS"/>
</dbReference>
<dbReference type="InterPro" id="IPR005811">
    <property type="entry name" value="SUCC_ACL_C"/>
</dbReference>
<dbReference type="InterPro" id="IPR005809">
    <property type="entry name" value="Succ_CoA_ligase-like_bsu"/>
</dbReference>
<dbReference type="InterPro" id="IPR016102">
    <property type="entry name" value="Succinyl-CoA_synth-like"/>
</dbReference>
<dbReference type="NCBIfam" id="NF001913">
    <property type="entry name" value="PRK00696.1"/>
    <property type="match status" value="1"/>
</dbReference>
<dbReference type="NCBIfam" id="TIGR01016">
    <property type="entry name" value="sucCoAbeta"/>
    <property type="match status" value="1"/>
</dbReference>
<dbReference type="PANTHER" id="PTHR11815:SF10">
    <property type="entry name" value="SUCCINATE--COA LIGASE [GDP-FORMING] SUBUNIT BETA, MITOCHONDRIAL"/>
    <property type="match status" value="1"/>
</dbReference>
<dbReference type="PANTHER" id="PTHR11815">
    <property type="entry name" value="SUCCINYL-COA SYNTHETASE BETA CHAIN"/>
    <property type="match status" value="1"/>
</dbReference>
<dbReference type="Pfam" id="PF08442">
    <property type="entry name" value="ATP-grasp_2"/>
    <property type="match status" value="1"/>
</dbReference>
<dbReference type="Pfam" id="PF00549">
    <property type="entry name" value="Ligase_CoA"/>
    <property type="match status" value="1"/>
</dbReference>
<dbReference type="PIRSF" id="PIRSF001554">
    <property type="entry name" value="SucCS_beta"/>
    <property type="match status" value="1"/>
</dbReference>
<dbReference type="SUPFAM" id="SSF56059">
    <property type="entry name" value="Glutathione synthetase ATP-binding domain-like"/>
    <property type="match status" value="1"/>
</dbReference>
<dbReference type="SUPFAM" id="SSF52210">
    <property type="entry name" value="Succinyl-CoA synthetase domains"/>
    <property type="match status" value="1"/>
</dbReference>
<dbReference type="PROSITE" id="PS50975">
    <property type="entry name" value="ATP_GRASP"/>
    <property type="match status" value="1"/>
</dbReference>
<dbReference type="PROSITE" id="PS01217">
    <property type="entry name" value="SUCCINYL_COA_LIG_3"/>
    <property type="match status" value="1"/>
</dbReference>
<comment type="function">
    <text evidence="1">Succinyl-CoA synthetase functions in the citric acid cycle (TCA), coupling the hydrolysis of succinyl-CoA to the synthesis of either ATP or GTP and thus represents the only step of substrate-level phosphorylation in the TCA. The beta subunit provides nucleotide specificity of the enzyme and binds the substrate succinate, while the binding sites for coenzyme A and phosphate are found in the alpha subunit.</text>
</comment>
<comment type="catalytic activity">
    <reaction evidence="1">
        <text>succinate + ATP + CoA = succinyl-CoA + ADP + phosphate</text>
        <dbReference type="Rhea" id="RHEA:17661"/>
        <dbReference type="ChEBI" id="CHEBI:30031"/>
        <dbReference type="ChEBI" id="CHEBI:30616"/>
        <dbReference type="ChEBI" id="CHEBI:43474"/>
        <dbReference type="ChEBI" id="CHEBI:57287"/>
        <dbReference type="ChEBI" id="CHEBI:57292"/>
        <dbReference type="ChEBI" id="CHEBI:456216"/>
        <dbReference type="EC" id="6.2.1.5"/>
    </reaction>
    <physiologicalReaction direction="right-to-left" evidence="1">
        <dbReference type="Rhea" id="RHEA:17663"/>
    </physiologicalReaction>
</comment>
<comment type="catalytic activity">
    <reaction evidence="1">
        <text>GTP + succinate + CoA = succinyl-CoA + GDP + phosphate</text>
        <dbReference type="Rhea" id="RHEA:22120"/>
        <dbReference type="ChEBI" id="CHEBI:30031"/>
        <dbReference type="ChEBI" id="CHEBI:37565"/>
        <dbReference type="ChEBI" id="CHEBI:43474"/>
        <dbReference type="ChEBI" id="CHEBI:57287"/>
        <dbReference type="ChEBI" id="CHEBI:57292"/>
        <dbReference type="ChEBI" id="CHEBI:58189"/>
    </reaction>
    <physiologicalReaction direction="right-to-left" evidence="1">
        <dbReference type="Rhea" id="RHEA:22122"/>
    </physiologicalReaction>
</comment>
<comment type="cofactor">
    <cofactor evidence="1">
        <name>Mg(2+)</name>
        <dbReference type="ChEBI" id="CHEBI:18420"/>
    </cofactor>
    <text evidence="1">Binds 1 Mg(2+) ion per subunit.</text>
</comment>
<comment type="pathway">
    <text evidence="1">Carbohydrate metabolism; tricarboxylic acid cycle; succinate from succinyl-CoA (ligase route): step 1/1.</text>
</comment>
<comment type="subunit">
    <text evidence="1">Heterotetramer of two alpha and two beta subunits.</text>
</comment>
<comment type="similarity">
    <text evidence="1">Belongs to the succinate/malate CoA ligase beta subunit family.</text>
</comment>
<accession>C4K0K1</accession>
<protein>
    <recommendedName>
        <fullName evidence="1">Succinate--CoA ligase [ADP-forming] subunit beta</fullName>
        <ecNumber evidence="1">6.2.1.5</ecNumber>
    </recommendedName>
    <alternativeName>
        <fullName evidence="1">Succinyl-CoA synthetase subunit beta</fullName>
        <shortName evidence="1">SCS-beta</shortName>
    </alternativeName>
</protein>
<proteinExistence type="inferred from homology"/>
<organism>
    <name type="scientific">Rickettsia peacockii (strain Rustic)</name>
    <dbReference type="NCBI Taxonomy" id="562019"/>
    <lineage>
        <taxon>Bacteria</taxon>
        <taxon>Pseudomonadati</taxon>
        <taxon>Pseudomonadota</taxon>
        <taxon>Alphaproteobacteria</taxon>
        <taxon>Rickettsiales</taxon>
        <taxon>Rickettsiaceae</taxon>
        <taxon>Rickettsieae</taxon>
        <taxon>Rickettsia</taxon>
        <taxon>spotted fever group</taxon>
    </lineage>
</organism>